<feature type="chain" id="PRO_0000430498" description="Chitinase">
    <location>
        <begin position="1"/>
        <end position="10" status="greater than"/>
    </location>
</feature>
<feature type="non-terminal residue" evidence="2">
    <location>
        <position position="10"/>
    </location>
</feature>
<comment type="function">
    <text evidence="1">Has antifungal activity. Inhibits mycelial growth of wood rotting fungi P.chrysosporium MTCC 787, S.commune ITCC 3751, G.trabeum MTCC 355, P.agaricans ITCC 761, C.versicolor MTCC 138, P.versicolor ITCC 13, P.placenta MTCC 144 and P.friabilis ITCC 335.</text>
</comment>
<comment type="catalytic activity">
    <reaction evidence="1">
        <text>Random endo-hydrolysis of N-acetyl-beta-D-glucosaminide (1-&gt;4)-beta-linkages in chitin and chitodextrins.</text>
        <dbReference type="EC" id="3.2.1.14"/>
    </reaction>
</comment>
<comment type="activity regulation">
    <text evidence="1">Inhibited by Hg(2+) and, to a lesser extent, by Ag(+). Hardly or not at all affected by Fe(3+), Mg(2+), Co(2+), Zn(2+), Ca(2+), K(+), EDTA, beta-mercaptoethanol and N-acetylglucosamine.</text>
</comment>
<comment type="biophysicochemical properties">
    <kinetics>
        <KM evidence="1">0.143 mM for p-nitrophenyl-N-acetyl-beta-D-N,N'-diacetylchitobiose</KM>
        <Vmax evidence="1">6.6 umol/h/mg enzyme with p-nitrophenyl-N-acetyl-beta-D-N,N'-diacetylchitobiose as substrate</Vmax>
    </kinetics>
    <phDependence>
        <text evidence="1">Optimum pH is 5 at 37 degrees Celsius. Retains &gt;80% activity after incubation at pH 3-10 for 1 hour.</text>
    </phDependence>
    <temperatureDependence>
        <text evidence="1">Optimum temperature is 50 degrees Celsius. Retains only 60% and 25% activity after incubation at 30 degrees Celsius and 60 degrees Celsius for 1 hour, respectively.</text>
    </temperatureDependence>
</comment>
<comment type="subcellular location">
    <subcellularLocation>
        <location evidence="1">Secreted</location>
    </subcellularLocation>
</comment>
<keyword id="KW-0929">Antimicrobial</keyword>
<keyword id="KW-0119">Carbohydrate metabolism</keyword>
<keyword id="KW-0146">Chitin degradation</keyword>
<keyword id="KW-0903">Direct protein sequencing</keyword>
<keyword id="KW-0295">Fungicide</keyword>
<keyword id="KW-0326">Glycosidase</keyword>
<keyword id="KW-0378">Hydrolase</keyword>
<keyword id="KW-0624">Polysaccharide degradation</keyword>
<keyword id="KW-0964">Secreted</keyword>
<name>CHIT_STRVO</name>
<organism>
    <name type="scientific">Streptomyces violaceusniger</name>
    <dbReference type="NCBI Taxonomy" id="68280"/>
    <lineage>
        <taxon>Bacteria</taxon>
        <taxon>Bacillati</taxon>
        <taxon>Actinomycetota</taxon>
        <taxon>Actinomycetes</taxon>
        <taxon>Kitasatosporales</taxon>
        <taxon>Streptomycetaceae</taxon>
        <taxon>Streptomyces</taxon>
        <taxon>Streptomyces violaceusniger group</taxon>
    </lineage>
</organism>
<reference evidence="3" key="1">
    <citation type="journal article" date="2013" name="J. Basic Microbiol.">
        <title>Purification and characterization of an extracellular chitinase from antagonistic Streptomyces violaceusniger.</title>
        <authorList>
            <person name="Nagpure A."/>
            <person name="Gupta R.K."/>
        </authorList>
    </citation>
    <scope>PROTEIN SEQUENCE</scope>
    <scope>FUNCTION</scope>
    <scope>CATALYTIC ACTIVITY</scope>
    <scope>ACTIVITY REGULATION</scope>
    <scope>BIOPHYSICOCHEMICAL PROPERTIES</scope>
    <scope>SUBCELLULAR LOCATION</scope>
    <scope>IDENTIFICATION BY MASS SPECTROMETRY</scope>
    <source>
        <strain evidence="1">MTCC 3959</strain>
    </source>
</reference>
<protein>
    <recommendedName>
        <fullName evidence="2">Chitinase</fullName>
        <ecNumber evidence="1">3.2.1.14</ecNumber>
    </recommendedName>
</protein>
<evidence type="ECO:0000269" key="1">
    <source>
    </source>
</evidence>
<evidence type="ECO:0000303" key="2">
    <source>
    </source>
</evidence>
<evidence type="ECO:0000305" key="3"/>
<dbReference type="EC" id="3.2.1.14" evidence="1"/>
<dbReference type="GO" id="GO:0005576">
    <property type="term" value="C:extracellular region"/>
    <property type="evidence" value="ECO:0007669"/>
    <property type="project" value="UniProtKB-SubCell"/>
</dbReference>
<dbReference type="GO" id="GO:0008843">
    <property type="term" value="F:endochitinase activity"/>
    <property type="evidence" value="ECO:0007669"/>
    <property type="project" value="UniProtKB-EC"/>
</dbReference>
<dbReference type="GO" id="GO:0006032">
    <property type="term" value="P:chitin catabolic process"/>
    <property type="evidence" value="ECO:0007669"/>
    <property type="project" value="UniProtKB-KW"/>
</dbReference>
<dbReference type="GO" id="GO:0050832">
    <property type="term" value="P:defense response to fungus"/>
    <property type="evidence" value="ECO:0007669"/>
    <property type="project" value="UniProtKB-KW"/>
</dbReference>
<dbReference type="GO" id="GO:0031640">
    <property type="term" value="P:killing of cells of another organism"/>
    <property type="evidence" value="ECO:0007669"/>
    <property type="project" value="UniProtKB-KW"/>
</dbReference>
<dbReference type="GO" id="GO:0000272">
    <property type="term" value="P:polysaccharide catabolic process"/>
    <property type="evidence" value="ECO:0007669"/>
    <property type="project" value="UniProtKB-KW"/>
</dbReference>
<sequence length="10" mass="811">GDGTGPGPGP</sequence>
<accession>P86977</accession>
<proteinExistence type="evidence at protein level"/>